<sequence>KACPRNCDTDIAYMVCPSSGERIIRKVCTNCCAAQKGCKLFRSNGSIKCTGT</sequence>
<evidence type="ECO:0000269" key="1">
    <source>
    </source>
</evidence>
<evidence type="ECO:0000305" key="2"/>
<name>IP23_CAPAN</name>
<feature type="chain" id="PRO_0000217672" description="Proteinase inhibitor PSI-1.2">
    <location>
        <begin position="1"/>
        <end position="52"/>
    </location>
</feature>
<feature type="disulfide bond" evidence="1">
    <location>
        <begin position="3"/>
        <end position="32"/>
    </location>
</feature>
<feature type="disulfide bond" evidence="1">
    <location>
        <begin position="7"/>
        <end position="28"/>
    </location>
</feature>
<feature type="disulfide bond" evidence="1">
    <location>
        <begin position="16"/>
        <end position="38"/>
    </location>
</feature>
<feature type="disulfide bond" evidence="1">
    <location>
        <begin position="31"/>
        <end position="49"/>
    </location>
</feature>
<reference evidence="2" key="1">
    <citation type="journal article" date="2001" name="Protein Sci.">
        <title>Proteins of circularly permuted sequence present within the same organism: the major serine proteinase inhibitor from Capsicum annuum seeds.</title>
        <authorList>
            <person name="Antcheva N."/>
            <person name="Pintar A."/>
            <person name="Patthy A."/>
            <person name="Simoncsits A."/>
            <person name="Barta E."/>
            <person name="Tchorbanov B."/>
            <person name="Pongor S."/>
        </authorList>
    </citation>
    <scope>PROTEIN SEQUENCE</scope>
    <scope>FUNCTION</scope>
    <scope>MASS SPECTROMETRY</scope>
    <scope>DISULFIDE BONDS</scope>
    <source>
        <tissue>Seed</tissue>
    </source>
</reference>
<dbReference type="SMR" id="P83241"/>
<dbReference type="MEROPS" id="I20.952"/>
<dbReference type="GO" id="GO:0004867">
    <property type="term" value="F:serine-type endopeptidase inhibitor activity"/>
    <property type="evidence" value="ECO:0000314"/>
    <property type="project" value="UniProtKB"/>
</dbReference>
<dbReference type="Gene3D" id="3.30.60.30">
    <property type="match status" value="1"/>
</dbReference>
<dbReference type="InterPro" id="IPR003465">
    <property type="entry name" value="Prot_inh_I20"/>
</dbReference>
<dbReference type="InterPro" id="IPR051391">
    <property type="entry name" value="Protease_inhibitor_I20"/>
</dbReference>
<dbReference type="PANTHER" id="PTHR33832:SF16">
    <property type="entry name" value="PROTEINASE INHIBITOR PSI-1.2-LIKE"/>
    <property type="match status" value="1"/>
</dbReference>
<dbReference type="PANTHER" id="PTHR33832">
    <property type="entry name" value="SERINE-TYPE ENDOPEPTIDASE INHIBITOR"/>
    <property type="match status" value="1"/>
</dbReference>
<dbReference type="Pfam" id="PF02428">
    <property type="entry name" value="Prot_inhib_II"/>
    <property type="match status" value="1"/>
</dbReference>
<dbReference type="SUPFAM" id="SSF100897">
    <property type="entry name" value="Plant proteinase inhibitors"/>
    <property type="match status" value="1"/>
</dbReference>
<accession>P83241</accession>
<comment type="function">
    <text evidence="1">Potent inhibitor of trypsin and a weaker inhibitor of chymotrypsin. It does not inhibit elastase and subtilisin DY.</text>
</comment>
<comment type="mass spectrometry"/>
<comment type="similarity">
    <text evidence="2">Belongs to the protease inhibitor I20 (potato type II proteinase inhibitor) family.</text>
</comment>
<keyword id="KW-0903">Direct protein sequencing</keyword>
<keyword id="KW-1015">Disulfide bond</keyword>
<keyword id="KW-0646">Protease inhibitor</keyword>
<keyword id="KW-0722">Serine protease inhibitor</keyword>
<protein>
    <recommendedName>
        <fullName>Proteinase inhibitor PSI-1.2</fullName>
    </recommendedName>
</protein>
<proteinExistence type="evidence at protein level"/>
<organism evidence="2">
    <name type="scientific">Capsicum annuum</name>
    <name type="common">Capsicum pepper</name>
    <dbReference type="NCBI Taxonomy" id="4072"/>
    <lineage>
        <taxon>Eukaryota</taxon>
        <taxon>Viridiplantae</taxon>
        <taxon>Streptophyta</taxon>
        <taxon>Embryophyta</taxon>
        <taxon>Tracheophyta</taxon>
        <taxon>Spermatophyta</taxon>
        <taxon>Magnoliopsida</taxon>
        <taxon>eudicotyledons</taxon>
        <taxon>Gunneridae</taxon>
        <taxon>Pentapetalae</taxon>
        <taxon>asterids</taxon>
        <taxon>lamiids</taxon>
        <taxon>Solanales</taxon>
        <taxon>Solanaceae</taxon>
        <taxon>Solanoideae</taxon>
        <taxon>Capsiceae</taxon>
        <taxon>Capsicum</taxon>
    </lineage>
</organism>